<sequence>MNINVAELLNGNYILLLFVVLALGLCLGKLRLGSIQLGNSIGVLVVSLLLGQQHFSINTDALNLGFMLFIFCVGVEAGPNFFSIFFRDGKNYLMLALVMVGSALVIALGLGKLFGWDIGLTAGMLAGSMTSTPVLVGAGDTLRHSGMESRQLSLALDNLSLGYALTYLIGLVSLIVGARYLPKLQHQDLQTSAQQIARERGLDTDANRKVYLPVIRAYRVGPELVAWTDGKNLRELGIYRQTGCYIERIRRNGILANPDGDAVLQMGDEIALVGYPDAHARLDPSFRNGKEVFDRDLLDMRIVTEEVVVKNHNAVGKRLAQLKLTDHGCFLNRVIRSQIEMPIDDNVVLNKGDVLQVSGDARRVKTIADRIGFISIHSQVTDLLAFCAFFVIGLMIGMITFQFSTFSFGMGNAAGLLFAGIMLGFMRANHPTFGYIPQGALSMVKEFGLMVFMAGVGLSAGSGINNGLGAIGGQMLIAGLIVSLVPVVICFLFGAYVLRMNRALLFGAMMGARTCAPAMEIISDTARSNIPALGYAGTYAIANVLLTLAGTIIVMVWPGLG</sequence>
<protein>
    <recommendedName>
        <fullName evidence="1">Putative transport protein YbjL</fullName>
    </recommendedName>
</protein>
<proteinExistence type="inferred from homology"/>
<evidence type="ECO:0000255" key="1">
    <source>
        <dbReference type="HAMAP-Rule" id="MF_01015"/>
    </source>
</evidence>
<reference key="1">
    <citation type="journal article" date="2009" name="PLoS Genet.">
        <title>Organised genome dynamics in the Escherichia coli species results in highly diverse adaptive paths.</title>
        <authorList>
            <person name="Touchon M."/>
            <person name="Hoede C."/>
            <person name="Tenaillon O."/>
            <person name="Barbe V."/>
            <person name="Baeriswyl S."/>
            <person name="Bidet P."/>
            <person name="Bingen E."/>
            <person name="Bonacorsi S."/>
            <person name="Bouchier C."/>
            <person name="Bouvet O."/>
            <person name="Calteau A."/>
            <person name="Chiapello H."/>
            <person name="Clermont O."/>
            <person name="Cruveiller S."/>
            <person name="Danchin A."/>
            <person name="Diard M."/>
            <person name="Dossat C."/>
            <person name="Karoui M.E."/>
            <person name="Frapy E."/>
            <person name="Garry L."/>
            <person name="Ghigo J.M."/>
            <person name="Gilles A.M."/>
            <person name="Johnson J."/>
            <person name="Le Bouguenec C."/>
            <person name="Lescat M."/>
            <person name="Mangenot S."/>
            <person name="Martinez-Jehanne V."/>
            <person name="Matic I."/>
            <person name="Nassif X."/>
            <person name="Oztas S."/>
            <person name="Petit M.A."/>
            <person name="Pichon C."/>
            <person name="Rouy Z."/>
            <person name="Ruf C.S."/>
            <person name="Schneider D."/>
            <person name="Tourret J."/>
            <person name="Vacherie B."/>
            <person name="Vallenet D."/>
            <person name="Medigue C."/>
            <person name="Rocha E.P.C."/>
            <person name="Denamur E."/>
        </authorList>
    </citation>
    <scope>NUCLEOTIDE SEQUENCE [LARGE SCALE GENOMIC DNA]</scope>
    <source>
        <strain>S88 / ExPEC</strain>
    </source>
</reference>
<keyword id="KW-1003">Cell membrane</keyword>
<keyword id="KW-0472">Membrane</keyword>
<keyword id="KW-1185">Reference proteome</keyword>
<keyword id="KW-0677">Repeat</keyword>
<keyword id="KW-0812">Transmembrane</keyword>
<keyword id="KW-1133">Transmembrane helix</keyword>
<keyword id="KW-0813">Transport</keyword>
<gene>
    <name evidence="1" type="primary">ybjL</name>
    <name type="ordered locus">ECS88_0864</name>
</gene>
<name>YBJL_ECO45</name>
<dbReference type="EMBL" id="CU928161">
    <property type="protein sequence ID" value="CAR02202.1"/>
    <property type="molecule type" value="Genomic_DNA"/>
</dbReference>
<dbReference type="RefSeq" id="WP_001024876.1">
    <property type="nucleotide sequence ID" value="NC_011742.1"/>
</dbReference>
<dbReference type="SMR" id="B7MGV4"/>
<dbReference type="KEGG" id="ecz:ECS88_0864"/>
<dbReference type="HOGENOM" id="CLU_035023_2_2_6"/>
<dbReference type="Proteomes" id="UP000000747">
    <property type="component" value="Chromosome"/>
</dbReference>
<dbReference type="GO" id="GO:0005886">
    <property type="term" value="C:plasma membrane"/>
    <property type="evidence" value="ECO:0007669"/>
    <property type="project" value="UniProtKB-SubCell"/>
</dbReference>
<dbReference type="GO" id="GO:0008324">
    <property type="term" value="F:monoatomic cation transmembrane transporter activity"/>
    <property type="evidence" value="ECO:0007669"/>
    <property type="project" value="InterPro"/>
</dbReference>
<dbReference type="GO" id="GO:0006813">
    <property type="term" value="P:potassium ion transport"/>
    <property type="evidence" value="ECO:0007669"/>
    <property type="project" value="InterPro"/>
</dbReference>
<dbReference type="FunFam" id="3.30.70.1450:FF:000003">
    <property type="entry name" value="Putative transport protein YbjL"/>
    <property type="match status" value="1"/>
</dbReference>
<dbReference type="Gene3D" id="3.30.70.1450">
    <property type="entry name" value="Regulator of K+ conductance, C-terminal domain"/>
    <property type="match status" value="2"/>
</dbReference>
<dbReference type="HAMAP" id="MF_01015">
    <property type="entry name" value="YbjL"/>
    <property type="match status" value="1"/>
</dbReference>
<dbReference type="InterPro" id="IPR050144">
    <property type="entry name" value="AAE_transporter"/>
</dbReference>
<dbReference type="InterPro" id="IPR006037">
    <property type="entry name" value="RCK_C"/>
</dbReference>
<dbReference type="InterPro" id="IPR036721">
    <property type="entry name" value="RCK_C_sf"/>
</dbReference>
<dbReference type="InterPro" id="IPR023017">
    <property type="entry name" value="Transp_YbjL_put"/>
</dbReference>
<dbReference type="InterPro" id="IPR006512">
    <property type="entry name" value="YidE_YbjL"/>
</dbReference>
<dbReference type="NCBIfam" id="NF003440">
    <property type="entry name" value="PRK04972.1"/>
    <property type="match status" value="1"/>
</dbReference>
<dbReference type="NCBIfam" id="TIGR01625">
    <property type="entry name" value="YidE_YbjL_dupl"/>
    <property type="match status" value="2"/>
</dbReference>
<dbReference type="PANTHER" id="PTHR30445">
    <property type="entry name" value="K(+)_H(+) ANTIPORTER SUBUNIT KHTT"/>
    <property type="match status" value="1"/>
</dbReference>
<dbReference type="PANTHER" id="PTHR30445:SF10">
    <property type="entry name" value="TRANSPORT PROTEIN YBJL-RELATED"/>
    <property type="match status" value="1"/>
</dbReference>
<dbReference type="Pfam" id="PF06826">
    <property type="entry name" value="Asp-Al_Ex"/>
    <property type="match status" value="2"/>
</dbReference>
<dbReference type="Pfam" id="PF02080">
    <property type="entry name" value="TrkA_C"/>
    <property type="match status" value="2"/>
</dbReference>
<dbReference type="SUPFAM" id="SSF116726">
    <property type="entry name" value="TrkA C-terminal domain-like"/>
    <property type="match status" value="2"/>
</dbReference>
<dbReference type="PROSITE" id="PS51202">
    <property type="entry name" value="RCK_C"/>
    <property type="match status" value="2"/>
</dbReference>
<organism>
    <name type="scientific">Escherichia coli O45:K1 (strain S88 / ExPEC)</name>
    <dbReference type="NCBI Taxonomy" id="585035"/>
    <lineage>
        <taxon>Bacteria</taxon>
        <taxon>Pseudomonadati</taxon>
        <taxon>Pseudomonadota</taxon>
        <taxon>Gammaproteobacteria</taxon>
        <taxon>Enterobacterales</taxon>
        <taxon>Enterobacteriaceae</taxon>
        <taxon>Escherichia</taxon>
    </lineage>
</organism>
<accession>B7MGV4</accession>
<comment type="subcellular location">
    <subcellularLocation>
        <location evidence="1">Cell membrane</location>
        <topology evidence="1">Multi-pass membrane protein</topology>
    </subcellularLocation>
</comment>
<comment type="similarity">
    <text evidence="1">Belongs to the AAE transporter (TC 2.A.81) family. YbjL subfamily.</text>
</comment>
<feature type="chain" id="PRO_1000135178" description="Putative transport protein YbjL">
    <location>
        <begin position="1"/>
        <end position="561"/>
    </location>
</feature>
<feature type="transmembrane region" description="Helical" evidence="1">
    <location>
        <begin position="8"/>
        <end position="28"/>
    </location>
</feature>
<feature type="transmembrane region" description="Helical" evidence="1">
    <location>
        <begin position="32"/>
        <end position="52"/>
    </location>
</feature>
<feature type="transmembrane region" description="Helical" evidence="1">
    <location>
        <begin position="66"/>
        <end position="86"/>
    </location>
</feature>
<feature type="transmembrane region" description="Helical" evidence="1">
    <location>
        <begin position="94"/>
        <end position="114"/>
    </location>
</feature>
<feature type="transmembrane region" description="Helical" evidence="1">
    <location>
        <begin position="158"/>
        <end position="178"/>
    </location>
</feature>
<feature type="transmembrane region" description="Helical" evidence="1">
    <location>
        <begin position="383"/>
        <end position="403"/>
    </location>
</feature>
<feature type="transmembrane region" description="Helical" evidence="1">
    <location>
        <begin position="406"/>
        <end position="426"/>
    </location>
</feature>
<feature type="transmembrane region" description="Helical" evidence="1">
    <location>
        <begin position="451"/>
        <end position="471"/>
    </location>
</feature>
<feature type="transmembrane region" description="Helical" evidence="1">
    <location>
        <begin position="475"/>
        <end position="495"/>
    </location>
</feature>
<feature type="transmembrane region" description="Helical" evidence="1">
    <location>
        <begin position="540"/>
        <end position="560"/>
    </location>
</feature>
<feature type="domain" description="RCK C-terminal 1" evidence="1">
    <location>
        <begin position="200"/>
        <end position="288"/>
    </location>
</feature>
<feature type="domain" description="RCK C-terminal 2" evidence="1">
    <location>
        <begin position="292"/>
        <end position="373"/>
    </location>
</feature>